<dbReference type="EMBL" id="U81482">
    <property type="protein sequence ID" value="AAB40707.1"/>
    <property type="molecule type" value="Genomic_DNA"/>
</dbReference>
<dbReference type="EMBL" id="U20162">
    <property type="protein sequence ID" value="AAB67496.1"/>
    <property type="molecule type" value="Genomic_DNA"/>
</dbReference>
<dbReference type="EMBL" id="AY692929">
    <property type="protein sequence ID" value="AAT92948.1"/>
    <property type="molecule type" value="Genomic_DNA"/>
</dbReference>
<dbReference type="EMBL" id="BK006945">
    <property type="protein sequence ID" value="DAA09713.1"/>
    <property type="molecule type" value="Genomic_DNA"/>
</dbReference>
<dbReference type="PIR" id="S59377">
    <property type="entry name" value="S59377"/>
</dbReference>
<dbReference type="RefSeq" id="NP_013515.3">
    <property type="nucleotide sequence ID" value="NM_001182299.3"/>
</dbReference>
<dbReference type="SMR" id="Q06686"/>
<dbReference type="BioGRID" id="31670">
    <property type="interactions" value="23"/>
</dbReference>
<dbReference type="DIP" id="DIP-4285N"/>
<dbReference type="FunCoup" id="Q06686">
    <property type="interactions" value="53"/>
</dbReference>
<dbReference type="IntAct" id="Q06686">
    <property type="interactions" value="2"/>
</dbReference>
<dbReference type="MINT" id="Q06686"/>
<dbReference type="STRING" id="4932.YLR411W"/>
<dbReference type="TCDB" id="1.A.56.1.4">
    <property type="family name" value="the copper transporter (ctr) family"/>
</dbReference>
<dbReference type="PaxDb" id="4932-YLR411W"/>
<dbReference type="PeptideAtlas" id="Q06686"/>
<dbReference type="EnsemblFungi" id="YLR411W_mRNA">
    <property type="protein sequence ID" value="YLR411W"/>
    <property type="gene ID" value="YLR411W"/>
</dbReference>
<dbReference type="GeneID" id="851129"/>
<dbReference type="KEGG" id="sce:YLR411W"/>
<dbReference type="AGR" id="SGD:S000004403"/>
<dbReference type="SGD" id="S000004403">
    <property type="gene designation" value="CTR3"/>
</dbReference>
<dbReference type="VEuPathDB" id="FungiDB:YLR411W"/>
<dbReference type="eggNOG" id="KOG3386">
    <property type="taxonomic scope" value="Eukaryota"/>
</dbReference>
<dbReference type="HOGENOM" id="CLU_079690_0_0_1"/>
<dbReference type="InParanoid" id="Q06686"/>
<dbReference type="OMA" id="MDMHDMH"/>
<dbReference type="OrthoDB" id="161814at2759"/>
<dbReference type="BioCyc" id="YEAST:G3O-32473-MONOMER"/>
<dbReference type="BioGRID-ORCS" id="851129">
    <property type="hits" value="0 hits in 10 CRISPR screens"/>
</dbReference>
<dbReference type="PRO" id="PR:Q06686"/>
<dbReference type="Proteomes" id="UP000002311">
    <property type="component" value="Chromosome XII"/>
</dbReference>
<dbReference type="RNAct" id="Q06686">
    <property type="molecule type" value="protein"/>
</dbReference>
<dbReference type="GO" id="GO:0030659">
    <property type="term" value="C:cytoplasmic vesicle membrane"/>
    <property type="evidence" value="ECO:0007669"/>
    <property type="project" value="UniProtKB-SubCell"/>
</dbReference>
<dbReference type="GO" id="GO:0005783">
    <property type="term" value="C:endoplasmic reticulum"/>
    <property type="evidence" value="ECO:0007005"/>
    <property type="project" value="SGD"/>
</dbReference>
<dbReference type="GO" id="GO:0005886">
    <property type="term" value="C:plasma membrane"/>
    <property type="evidence" value="ECO:0000314"/>
    <property type="project" value="SGD"/>
</dbReference>
<dbReference type="GO" id="GO:0005375">
    <property type="term" value="F:copper ion transmembrane transporter activity"/>
    <property type="evidence" value="ECO:0000314"/>
    <property type="project" value="SGD"/>
</dbReference>
<dbReference type="GO" id="GO:0015677">
    <property type="term" value="P:copper ion import"/>
    <property type="evidence" value="ECO:0000314"/>
    <property type="project" value="SGD"/>
</dbReference>
<dbReference type="InterPro" id="IPR007274">
    <property type="entry name" value="Cop_transporter"/>
</dbReference>
<dbReference type="PANTHER" id="PTHR12483:SF73">
    <property type="entry name" value="COPPER TRANSPORT PROTEIN CTR3"/>
    <property type="match status" value="1"/>
</dbReference>
<dbReference type="PANTHER" id="PTHR12483">
    <property type="entry name" value="SOLUTE CARRIER FAMILY 31 COPPER TRANSPORTERS"/>
    <property type="match status" value="1"/>
</dbReference>
<dbReference type="Pfam" id="PF04145">
    <property type="entry name" value="Ctr"/>
    <property type="match status" value="1"/>
</dbReference>
<protein>
    <recommendedName>
        <fullName>Copper transport protein CTR3</fullName>
        <shortName>Copper transporter 3</shortName>
    </recommendedName>
</protein>
<comment type="function">
    <text>Required for high affinity copper (probably reduced Cu I) transport into the cell.</text>
</comment>
<comment type="subcellular location">
    <subcellularLocation>
        <location>Cytoplasmic vesicle membrane</location>
        <topology>Multi-pass membrane protein</topology>
    </subcellularLocation>
</comment>
<comment type="induction">
    <text>By copper deprivation and repressed by copper excess.</text>
</comment>
<comment type="similarity">
    <text evidence="2">Belongs to the copper transporter (Ctr) (TC 1.A.56) family. SLC31A subfamily.</text>
</comment>
<reference key="1">
    <citation type="journal article" date="1996" name="Genes Dev.">
        <title>A widespread transposable element masks expression of a yeast copper transport gene.</title>
        <authorList>
            <person name="Knight S.A.B."/>
            <person name="Labbe S."/>
            <person name="Kwon L.F."/>
            <person name="Kosman D.J."/>
            <person name="Thiele D.J."/>
        </authorList>
    </citation>
    <scope>NUCLEOTIDE SEQUENCE [GENOMIC DNA]</scope>
    <scope>CHARACTERIZATION</scope>
    <source>
        <strain>ATCC 96099 / S288c / SEY6210</strain>
    </source>
</reference>
<reference key="2">
    <citation type="journal article" date="1997" name="Nature">
        <title>The nucleotide sequence of Saccharomyces cerevisiae chromosome XII.</title>
        <authorList>
            <person name="Johnston M."/>
            <person name="Hillier L.W."/>
            <person name="Riles L."/>
            <person name="Albermann K."/>
            <person name="Andre B."/>
            <person name="Ansorge W."/>
            <person name="Benes V."/>
            <person name="Brueckner M."/>
            <person name="Delius H."/>
            <person name="Dubois E."/>
            <person name="Duesterhoeft A."/>
            <person name="Entian K.-D."/>
            <person name="Floeth M."/>
            <person name="Goffeau A."/>
            <person name="Hebling U."/>
            <person name="Heumann K."/>
            <person name="Heuss-Neitzel D."/>
            <person name="Hilbert H."/>
            <person name="Hilger F."/>
            <person name="Kleine K."/>
            <person name="Koetter P."/>
            <person name="Louis E.J."/>
            <person name="Messenguy F."/>
            <person name="Mewes H.-W."/>
            <person name="Miosga T."/>
            <person name="Moestl D."/>
            <person name="Mueller-Auer S."/>
            <person name="Nentwich U."/>
            <person name="Obermaier B."/>
            <person name="Piravandi E."/>
            <person name="Pohl T.M."/>
            <person name="Portetelle D."/>
            <person name="Purnelle B."/>
            <person name="Rechmann S."/>
            <person name="Rieger M."/>
            <person name="Rinke M."/>
            <person name="Rose M."/>
            <person name="Scharfe M."/>
            <person name="Scherens B."/>
            <person name="Scholler P."/>
            <person name="Schwager C."/>
            <person name="Schwarz S."/>
            <person name="Underwood A.P."/>
            <person name="Urrestarazu L.A."/>
            <person name="Vandenbol M."/>
            <person name="Verhasselt P."/>
            <person name="Vierendeels F."/>
            <person name="Voet M."/>
            <person name="Volckaert G."/>
            <person name="Voss H."/>
            <person name="Wambutt R."/>
            <person name="Wedler E."/>
            <person name="Wedler H."/>
            <person name="Zimmermann F.K."/>
            <person name="Zollner A."/>
            <person name="Hani J."/>
            <person name="Hoheisel J.D."/>
        </authorList>
    </citation>
    <scope>NUCLEOTIDE SEQUENCE [LARGE SCALE GENOMIC DNA]</scope>
    <source>
        <strain>ATCC 204508 / S288c</strain>
    </source>
</reference>
<reference key="3">
    <citation type="journal article" date="2014" name="G3 (Bethesda)">
        <title>The reference genome sequence of Saccharomyces cerevisiae: Then and now.</title>
        <authorList>
            <person name="Engel S.R."/>
            <person name="Dietrich F.S."/>
            <person name="Fisk D.G."/>
            <person name="Binkley G."/>
            <person name="Balakrishnan R."/>
            <person name="Costanzo M.C."/>
            <person name="Dwight S.S."/>
            <person name="Hitz B.C."/>
            <person name="Karra K."/>
            <person name="Nash R.S."/>
            <person name="Weng S."/>
            <person name="Wong E.D."/>
            <person name="Lloyd P."/>
            <person name="Skrzypek M.S."/>
            <person name="Miyasato S.R."/>
            <person name="Simison M."/>
            <person name="Cherry J.M."/>
        </authorList>
    </citation>
    <scope>GENOME REANNOTATION</scope>
    <source>
        <strain>ATCC 204508 / S288c</strain>
    </source>
</reference>
<reference key="4">
    <citation type="journal article" date="2007" name="Genome Res.">
        <title>Approaching a complete repository of sequence-verified protein-encoding clones for Saccharomyces cerevisiae.</title>
        <authorList>
            <person name="Hu Y."/>
            <person name="Rolfs A."/>
            <person name="Bhullar B."/>
            <person name="Murthy T.V.S."/>
            <person name="Zhu C."/>
            <person name="Berger M.F."/>
            <person name="Camargo A.A."/>
            <person name="Kelley F."/>
            <person name="McCarron S."/>
            <person name="Jepson D."/>
            <person name="Richardson A."/>
            <person name="Raphael J."/>
            <person name="Moreira D."/>
            <person name="Taycher E."/>
            <person name="Zuo D."/>
            <person name="Mohr S."/>
            <person name="Kane M.F."/>
            <person name="Williamson J."/>
            <person name="Simpson A.J.G."/>
            <person name="Bulyk M.L."/>
            <person name="Harlow E."/>
            <person name="Marsischky G."/>
            <person name="Kolodner R.D."/>
            <person name="LaBaer J."/>
        </authorList>
    </citation>
    <scope>NUCLEOTIDE SEQUENCE [GENOMIC DNA]</scope>
    <source>
        <strain>ATCC 204508 / S288c</strain>
    </source>
</reference>
<reference key="5">
    <citation type="journal article" date="2006" name="Proc. Natl. Acad. Sci. U.S.A.">
        <title>A global topology map of the Saccharomyces cerevisiae membrane proteome.</title>
        <authorList>
            <person name="Kim H."/>
            <person name="Melen K."/>
            <person name="Oesterberg M."/>
            <person name="von Heijne G."/>
        </authorList>
    </citation>
    <scope>TOPOLOGY [LARGE SCALE ANALYSIS]</scope>
    <source>
        <strain>ATCC 208353 / W303-1A</strain>
    </source>
</reference>
<sequence>MNMGGSSSTAAKKATCKISMLWNWYTIDTCFIARSWRNDTKGKFAGSCIGCFALVVVAQWLTRFSRQFDVELLKRQKIKHLASYSPEEYVVKCGEEDAKSDIEELQGFYNEPSWKTTLISLQKSFIYSFYVWGPRRLNEPEDDLLKKVLSCCTLITPVDLYPTFLDHMIRVTIFVLQWGLSYIIMLLFMYYNGYIIISCLIGAIVGRFIFCYEPLGSLGANGSAQGTVSYDKESDDRKCCL</sequence>
<evidence type="ECO:0000255" key="1"/>
<evidence type="ECO:0000305" key="2"/>
<proteinExistence type="evidence at protein level"/>
<organism>
    <name type="scientific">Saccharomyces cerevisiae (strain ATCC 204508 / S288c)</name>
    <name type="common">Baker's yeast</name>
    <dbReference type="NCBI Taxonomy" id="559292"/>
    <lineage>
        <taxon>Eukaryota</taxon>
        <taxon>Fungi</taxon>
        <taxon>Dikarya</taxon>
        <taxon>Ascomycota</taxon>
        <taxon>Saccharomycotina</taxon>
        <taxon>Saccharomycetes</taxon>
        <taxon>Saccharomycetales</taxon>
        <taxon>Saccharomycetaceae</taxon>
        <taxon>Saccharomyces</taxon>
    </lineage>
</organism>
<keyword id="KW-0186">Copper</keyword>
<keyword id="KW-0187">Copper transport</keyword>
<keyword id="KW-0968">Cytoplasmic vesicle</keyword>
<keyword id="KW-0406">Ion transport</keyword>
<keyword id="KW-0472">Membrane</keyword>
<keyword id="KW-1185">Reference proteome</keyword>
<keyword id="KW-0812">Transmembrane</keyword>
<keyword id="KW-1133">Transmembrane helix</keyword>
<keyword id="KW-0813">Transport</keyword>
<accession>Q06686</accession>
<accession>D6VZ47</accession>
<feature type="chain" id="PRO_0000195047" description="Copper transport protein CTR3">
    <location>
        <begin position="1"/>
        <end position="241"/>
    </location>
</feature>
<feature type="topological domain" description="Lumenal" evidence="1">
    <location>
        <begin position="1"/>
        <end position="41"/>
    </location>
</feature>
<feature type="transmembrane region" description="Helical" evidence="1">
    <location>
        <begin position="42"/>
        <end position="62"/>
    </location>
</feature>
<feature type="topological domain" description="Cytoplasmic" evidence="1">
    <location>
        <begin position="63"/>
        <end position="159"/>
    </location>
</feature>
<feature type="transmembrane region" description="Helical" evidence="1">
    <location>
        <begin position="160"/>
        <end position="180"/>
    </location>
</feature>
<feature type="topological domain" description="Lumenal" evidence="1">
    <location>
        <begin position="181"/>
        <end position="182"/>
    </location>
</feature>
<feature type="transmembrane region" description="Helical" evidence="1">
    <location>
        <begin position="183"/>
        <end position="203"/>
    </location>
</feature>
<feature type="topological domain" description="Cytoplasmic" evidence="1">
    <location>
        <begin position="204"/>
        <end position="241"/>
    </location>
</feature>
<name>CTR3_YEAST</name>
<gene>
    <name type="primary">CTR3</name>
    <name type="ordered locus">YLR411W</name>
    <name type="ORF">L9931.6</name>
</gene>